<name>LYRM9_PHYPA</name>
<comment type="similarity">
    <text evidence="1">Belongs to the complex I LYR family. LYRM9 subfamily.</text>
</comment>
<protein>
    <recommendedName>
        <fullName>LYR motif-containing protein PHYPADRAFT_186863</fullName>
    </recommendedName>
</protein>
<feature type="chain" id="PRO_0000365121" description="LYR motif-containing protein PHYPADRAFT_186863">
    <location>
        <begin position="1"/>
        <end position="66"/>
    </location>
</feature>
<evidence type="ECO:0000305" key="1"/>
<keyword id="KW-1185">Reference proteome</keyword>
<organism>
    <name type="scientific">Physcomitrium patens</name>
    <name type="common">Spreading-leaved earth moss</name>
    <name type="synonym">Physcomitrella patens</name>
    <dbReference type="NCBI Taxonomy" id="3218"/>
    <lineage>
        <taxon>Eukaryota</taxon>
        <taxon>Viridiplantae</taxon>
        <taxon>Streptophyta</taxon>
        <taxon>Embryophyta</taxon>
        <taxon>Bryophyta</taxon>
        <taxon>Bryophytina</taxon>
        <taxon>Bryopsida</taxon>
        <taxon>Funariidae</taxon>
        <taxon>Funariales</taxon>
        <taxon>Funariaceae</taxon>
        <taxon>Physcomitrium</taxon>
    </lineage>
</organism>
<reference key="1">
    <citation type="journal article" date="2008" name="Science">
        <title>The Physcomitrella genome reveals evolutionary insights into the conquest of land by plants.</title>
        <authorList>
            <person name="Rensing S.A."/>
            <person name="Lang D."/>
            <person name="Zimmer A.D."/>
            <person name="Terry A."/>
            <person name="Salamov A."/>
            <person name="Shapiro H."/>
            <person name="Nishiyama T."/>
            <person name="Perroud P.-F."/>
            <person name="Lindquist E.A."/>
            <person name="Kamisugi Y."/>
            <person name="Tanahashi T."/>
            <person name="Sakakibara K."/>
            <person name="Fujita T."/>
            <person name="Oishi K."/>
            <person name="Shin-I T."/>
            <person name="Kuroki Y."/>
            <person name="Toyoda A."/>
            <person name="Suzuki Y."/>
            <person name="Hashimoto S.-I."/>
            <person name="Yamaguchi K."/>
            <person name="Sugano S."/>
            <person name="Kohara Y."/>
            <person name="Fujiyama A."/>
            <person name="Anterola A."/>
            <person name="Aoki S."/>
            <person name="Ashton N."/>
            <person name="Barbazuk W.B."/>
            <person name="Barker E."/>
            <person name="Bennetzen J.L."/>
            <person name="Blankenship R."/>
            <person name="Cho S.H."/>
            <person name="Dutcher S.K."/>
            <person name="Estelle M."/>
            <person name="Fawcett J.A."/>
            <person name="Gundlach H."/>
            <person name="Hanada K."/>
            <person name="Heyl A."/>
            <person name="Hicks K.A."/>
            <person name="Hughes J."/>
            <person name="Lohr M."/>
            <person name="Mayer K."/>
            <person name="Melkozernov A."/>
            <person name="Murata T."/>
            <person name="Nelson D.R."/>
            <person name="Pils B."/>
            <person name="Prigge M."/>
            <person name="Reiss B."/>
            <person name="Renner T."/>
            <person name="Rombauts S."/>
            <person name="Rushton P.J."/>
            <person name="Sanderfoot A."/>
            <person name="Schween G."/>
            <person name="Shiu S.-H."/>
            <person name="Stueber K."/>
            <person name="Theodoulou F.L."/>
            <person name="Tu H."/>
            <person name="Van de Peer Y."/>
            <person name="Verrier P.J."/>
            <person name="Waters E."/>
            <person name="Wood A."/>
            <person name="Yang L."/>
            <person name="Cove D."/>
            <person name="Cuming A.C."/>
            <person name="Hasebe M."/>
            <person name="Lucas S."/>
            <person name="Mishler B.D."/>
            <person name="Reski R."/>
            <person name="Grigoriev I.V."/>
            <person name="Quatrano R.S."/>
            <person name="Boore J.L."/>
        </authorList>
    </citation>
    <scope>NUCLEOTIDE SEQUENCE [LARGE SCALE GENOMIC DNA]</scope>
    <source>
        <strain>cv. Gransden 2004</strain>
    </source>
</reference>
<sequence>MSQAVKQAYREVLKLVKRLPPPSRGYYAQYARENFVTYSEVEDPESIRSLLARVHHHTCWVLKKVR</sequence>
<accession>A9SNJ1</accession>
<dbReference type="EMBL" id="DS544987">
    <property type="protein sequence ID" value="EDQ67204.1"/>
    <property type="molecule type" value="Genomic_DNA"/>
</dbReference>
<dbReference type="RefSeq" id="XP_001767929.1">
    <property type="nucleotide sequence ID" value="XM_001767877.1"/>
</dbReference>
<dbReference type="SMR" id="A9SNJ1"/>
<dbReference type="FunCoup" id="A9SNJ1">
    <property type="interactions" value="126"/>
</dbReference>
<dbReference type="PaxDb" id="3218-PP1S98_150V6.1"/>
<dbReference type="eggNOG" id="ENOG502S44B">
    <property type="taxonomic scope" value="Eukaryota"/>
</dbReference>
<dbReference type="HOGENOM" id="CLU_191745_0_0_1"/>
<dbReference type="InParanoid" id="A9SNJ1"/>
<dbReference type="OMA" id="SLWVLHK"/>
<dbReference type="Proteomes" id="UP000006727">
    <property type="component" value="Chromosome 17"/>
</dbReference>
<dbReference type="CDD" id="cd20269">
    <property type="entry name" value="Complex1_LYR_LYRM9"/>
    <property type="match status" value="1"/>
</dbReference>
<dbReference type="InterPro" id="IPR008011">
    <property type="entry name" value="Complex1_LYR_dom"/>
</dbReference>
<dbReference type="InterPro" id="IPR045291">
    <property type="entry name" value="Complex1_LYR_LYRM9"/>
</dbReference>
<dbReference type="PANTHER" id="PTHR36758">
    <property type="entry name" value="OS01G0342800 PROTEIN"/>
    <property type="match status" value="1"/>
</dbReference>
<dbReference type="PANTHER" id="PTHR36758:SF1">
    <property type="entry name" value="OS01G0342800 PROTEIN"/>
    <property type="match status" value="1"/>
</dbReference>
<dbReference type="Pfam" id="PF05347">
    <property type="entry name" value="Complex1_LYR"/>
    <property type="match status" value="1"/>
</dbReference>
<proteinExistence type="inferred from homology"/>
<gene>
    <name type="ORF">PHYPADRAFT_186863</name>
</gene>